<feature type="chain" id="PRO_0000374697" description="Ribosomal protein uS12 methylthiotransferase RimO">
    <location>
        <begin position="1"/>
        <end position="440"/>
    </location>
</feature>
<feature type="domain" description="MTTase N-terminal" evidence="1">
    <location>
        <begin position="5"/>
        <end position="116"/>
    </location>
</feature>
<feature type="domain" description="Radical SAM core" evidence="2">
    <location>
        <begin position="140"/>
        <end position="370"/>
    </location>
</feature>
<feature type="domain" description="TRAM" evidence="1">
    <location>
        <begin position="372"/>
        <end position="438"/>
    </location>
</feature>
<feature type="binding site" evidence="1">
    <location>
        <position position="14"/>
    </location>
    <ligand>
        <name>[4Fe-4S] cluster</name>
        <dbReference type="ChEBI" id="CHEBI:49883"/>
        <label>1</label>
    </ligand>
</feature>
<feature type="binding site" evidence="1">
    <location>
        <position position="50"/>
    </location>
    <ligand>
        <name>[4Fe-4S] cluster</name>
        <dbReference type="ChEBI" id="CHEBI:49883"/>
        <label>1</label>
    </ligand>
</feature>
<feature type="binding site" evidence="1">
    <location>
        <position position="79"/>
    </location>
    <ligand>
        <name>[4Fe-4S] cluster</name>
        <dbReference type="ChEBI" id="CHEBI:49883"/>
        <label>1</label>
    </ligand>
</feature>
<feature type="binding site" evidence="1">
    <location>
        <position position="154"/>
    </location>
    <ligand>
        <name>[4Fe-4S] cluster</name>
        <dbReference type="ChEBI" id="CHEBI:49883"/>
        <label>2</label>
        <note>4Fe-4S-S-AdoMet</note>
    </ligand>
</feature>
<feature type="binding site" evidence="1">
    <location>
        <position position="158"/>
    </location>
    <ligand>
        <name>[4Fe-4S] cluster</name>
        <dbReference type="ChEBI" id="CHEBI:49883"/>
        <label>2</label>
        <note>4Fe-4S-S-AdoMet</note>
    </ligand>
</feature>
<feature type="binding site" evidence="1">
    <location>
        <position position="161"/>
    </location>
    <ligand>
        <name>[4Fe-4S] cluster</name>
        <dbReference type="ChEBI" id="CHEBI:49883"/>
        <label>2</label>
        <note>4Fe-4S-S-AdoMet</note>
    </ligand>
</feature>
<organism>
    <name type="scientific">Trichormus variabilis (strain ATCC 29413 / PCC 7937)</name>
    <name type="common">Anabaena variabilis</name>
    <dbReference type="NCBI Taxonomy" id="240292"/>
    <lineage>
        <taxon>Bacteria</taxon>
        <taxon>Bacillati</taxon>
        <taxon>Cyanobacteriota</taxon>
        <taxon>Cyanophyceae</taxon>
        <taxon>Nostocales</taxon>
        <taxon>Nostocaceae</taxon>
        <taxon>Trichormus</taxon>
    </lineage>
</organism>
<name>RIMO_TRIV2</name>
<accession>Q3MFH1</accession>
<evidence type="ECO:0000255" key="1">
    <source>
        <dbReference type="HAMAP-Rule" id="MF_01865"/>
    </source>
</evidence>
<evidence type="ECO:0000255" key="2">
    <source>
        <dbReference type="PROSITE-ProRule" id="PRU01266"/>
    </source>
</evidence>
<proteinExistence type="inferred from homology"/>
<protein>
    <recommendedName>
        <fullName evidence="1">Ribosomal protein uS12 methylthiotransferase RimO</fullName>
        <shortName evidence="1">uS12 MTTase</shortName>
        <shortName evidence="1">uS12 methylthiotransferase</shortName>
        <ecNumber evidence="1">2.8.4.4</ecNumber>
    </recommendedName>
    <alternativeName>
        <fullName evidence="1">Ribosomal protein uS12 (aspartate-C(3))-methylthiotransferase</fullName>
    </alternativeName>
    <alternativeName>
        <fullName evidence="1">Ribosome maturation factor RimO</fullName>
    </alternativeName>
</protein>
<gene>
    <name evidence="1" type="primary">rimO</name>
    <name type="ordered locus">Ava_0641</name>
</gene>
<sequence length="440" mass="49257">MGEKPTIAISHLGCEKNRIDTEHMLGLLVKAGYGVDTNEELADYVIVNTCSFIESAREESVKTLVELAEANKKIVITGCMAQHFQTQLLEELPEAVAVVGTGDYHKIVNVIERAEQGERVTLVSAKPTYIADETTPRYRTTTEGVAYLRVAEGCDYRCAFCIIPHLRGNQRSRTIESIVAEAEQLVAQGVQEIILISQITTNYGLDIYGKPKLAELLRALGKINVPWIRMHYAYPTGLTPDVIAAIQETPNVLPYLDLPLQHSHSEVLRSMNRPWQGRVNDEIIERLKIAIPGAVLRTTFIVGFPGETEAQFEHLLQFVQRHEFDHVGVFTFSAEEGTPAYKLSNQLPQEVMDERRDRLMALQQPISWRKNQQEVGKTVEVLIEQENPESGKLIGRSGRFSPEVDGQVYVDGEAKLGTIIPVKIHSADEYDLFGQVVSHN</sequence>
<keyword id="KW-0004">4Fe-4S</keyword>
<keyword id="KW-0963">Cytoplasm</keyword>
<keyword id="KW-0408">Iron</keyword>
<keyword id="KW-0411">Iron-sulfur</keyword>
<keyword id="KW-0479">Metal-binding</keyword>
<keyword id="KW-0949">S-adenosyl-L-methionine</keyword>
<keyword id="KW-0808">Transferase</keyword>
<dbReference type="EC" id="2.8.4.4" evidence="1"/>
<dbReference type="EMBL" id="CP000117">
    <property type="protein sequence ID" value="ABA20265.1"/>
    <property type="molecule type" value="Genomic_DNA"/>
</dbReference>
<dbReference type="SMR" id="Q3MFH1"/>
<dbReference type="STRING" id="240292.Ava_0641"/>
<dbReference type="KEGG" id="ava:Ava_0641"/>
<dbReference type="eggNOG" id="COG0621">
    <property type="taxonomic scope" value="Bacteria"/>
</dbReference>
<dbReference type="HOGENOM" id="CLU_018697_0_1_3"/>
<dbReference type="Proteomes" id="UP000002533">
    <property type="component" value="Chromosome"/>
</dbReference>
<dbReference type="GO" id="GO:0005829">
    <property type="term" value="C:cytosol"/>
    <property type="evidence" value="ECO:0007669"/>
    <property type="project" value="TreeGrafter"/>
</dbReference>
<dbReference type="GO" id="GO:0051539">
    <property type="term" value="F:4 iron, 4 sulfur cluster binding"/>
    <property type="evidence" value="ECO:0007669"/>
    <property type="project" value="UniProtKB-UniRule"/>
</dbReference>
<dbReference type="GO" id="GO:0035599">
    <property type="term" value="F:aspartic acid methylthiotransferase activity"/>
    <property type="evidence" value="ECO:0007669"/>
    <property type="project" value="TreeGrafter"/>
</dbReference>
<dbReference type="GO" id="GO:0046872">
    <property type="term" value="F:metal ion binding"/>
    <property type="evidence" value="ECO:0007669"/>
    <property type="project" value="UniProtKB-KW"/>
</dbReference>
<dbReference type="GO" id="GO:0103039">
    <property type="term" value="F:protein methylthiotransferase activity"/>
    <property type="evidence" value="ECO:0007669"/>
    <property type="project" value="UniProtKB-EC"/>
</dbReference>
<dbReference type="GO" id="GO:0006400">
    <property type="term" value="P:tRNA modification"/>
    <property type="evidence" value="ECO:0007669"/>
    <property type="project" value="InterPro"/>
</dbReference>
<dbReference type="CDD" id="cd01335">
    <property type="entry name" value="Radical_SAM"/>
    <property type="match status" value="1"/>
</dbReference>
<dbReference type="FunFam" id="3.40.50.12160:FF:000002">
    <property type="entry name" value="Ribosomal protein S12 methylthiotransferase RimO"/>
    <property type="match status" value="1"/>
</dbReference>
<dbReference type="FunFam" id="3.80.30.20:FF:000001">
    <property type="entry name" value="tRNA-2-methylthio-N(6)-dimethylallyladenosine synthase 2"/>
    <property type="match status" value="1"/>
</dbReference>
<dbReference type="Gene3D" id="3.40.50.12160">
    <property type="entry name" value="Methylthiotransferase, N-terminal domain"/>
    <property type="match status" value="1"/>
</dbReference>
<dbReference type="Gene3D" id="2.40.50.140">
    <property type="entry name" value="Nucleic acid-binding proteins"/>
    <property type="match status" value="1"/>
</dbReference>
<dbReference type="Gene3D" id="3.80.30.20">
    <property type="entry name" value="tm_1862 like domain"/>
    <property type="match status" value="1"/>
</dbReference>
<dbReference type="HAMAP" id="MF_01865">
    <property type="entry name" value="MTTase_RimO"/>
    <property type="match status" value="1"/>
</dbReference>
<dbReference type="InterPro" id="IPR006638">
    <property type="entry name" value="Elp3/MiaA/NifB-like_rSAM"/>
</dbReference>
<dbReference type="InterPro" id="IPR005839">
    <property type="entry name" value="Methylthiotransferase"/>
</dbReference>
<dbReference type="InterPro" id="IPR020612">
    <property type="entry name" value="Methylthiotransferase_CS"/>
</dbReference>
<dbReference type="InterPro" id="IPR013848">
    <property type="entry name" value="Methylthiotransferase_N"/>
</dbReference>
<dbReference type="InterPro" id="IPR038135">
    <property type="entry name" value="Methylthiotransferase_N_sf"/>
</dbReference>
<dbReference type="InterPro" id="IPR012340">
    <property type="entry name" value="NA-bd_OB-fold"/>
</dbReference>
<dbReference type="InterPro" id="IPR005840">
    <property type="entry name" value="Ribosomal_uS12_MeSTrfase_RimO"/>
</dbReference>
<dbReference type="InterPro" id="IPR007197">
    <property type="entry name" value="rSAM"/>
</dbReference>
<dbReference type="InterPro" id="IPR023404">
    <property type="entry name" value="rSAM_horseshoe"/>
</dbReference>
<dbReference type="InterPro" id="IPR002792">
    <property type="entry name" value="TRAM_dom"/>
</dbReference>
<dbReference type="NCBIfam" id="TIGR01125">
    <property type="entry name" value="30S ribosomal protein S12 methylthiotransferase RimO"/>
    <property type="match status" value="1"/>
</dbReference>
<dbReference type="NCBIfam" id="TIGR00089">
    <property type="entry name" value="MiaB/RimO family radical SAM methylthiotransferase"/>
    <property type="match status" value="1"/>
</dbReference>
<dbReference type="PANTHER" id="PTHR43837">
    <property type="entry name" value="RIBOSOMAL PROTEIN S12 METHYLTHIOTRANSFERASE RIMO"/>
    <property type="match status" value="1"/>
</dbReference>
<dbReference type="PANTHER" id="PTHR43837:SF1">
    <property type="entry name" value="RIBOSOMAL PROTEIN US12 METHYLTHIOTRANSFERASE RIMO"/>
    <property type="match status" value="1"/>
</dbReference>
<dbReference type="Pfam" id="PF04055">
    <property type="entry name" value="Radical_SAM"/>
    <property type="match status" value="1"/>
</dbReference>
<dbReference type="Pfam" id="PF18693">
    <property type="entry name" value="TRAM_2"/>
    <property type="match status" value="1"/>
</dbReference>
<dbReference type="Pfam" id="PF00919">
    <property type="entry name" value="UPF0004"/>
    <property type="match status" value="1"/>
</dbReference>
<dbReference type="SFLD" id="SFLDG01082">
    <property type="entry name" value="B12-binding_domain_containing"/>
    <property type="match status" value="1"/>
</dbReference>
<dbReference type="SFLD" id="SFLDS00029">
    <property type="entry name" value="Radical_SAM"/>
    <property type="match status" value="1"/>
</dbReference>
<dbReference type="SFLD" id="SFLDF00274">
    <property type="entry name" value="ribosomal_protein_S12_methylth"/>
    <property type="match status" value="1"/>
</dbReference>
<dbReference type="SMART" id="SM00729">
    <property type="entry name" value="Elp3"/>
    <property type="match status" value="1"/>
</dbReference>
<dbReference type="SUPFAM" id="SSF102114">
    <property type="entry name" value="Radical SAM enzymes"/>
    <property type="match status" value="1"/>
</dbReference>
<dbReference type="PROSITE" id="PS51449">
    <property type="entry name" value="MTTASE_N"/>
    <property type="match status" value="1"/>
</dbReference>
<dbReference type="PROSITE" id="PS01278">
    <property type="entry name" value="MTTASE_RADICAL"/>
    <property type="match status" value="1"/>
</dbReference>
<dbReference type="PROSITE" id="PS51918">
    <property type="entry name" value="RADICAL_SAM"/>
    <property type="match status" value="1"/>
</dbReference>
<dbReference type="PROSITE" id="PS50926">
    <property type="entry name" value="TRAM"/>
    <property type="match status" value="1"/>
</dbReference>
<reference key="1">
    <citation type="journal article" date="2014" name="Stand. Genomic Sci.">
        <title>Complete genome sequence of Anabaena variabilis ATCC 29413.</title>
        <authorList>
            <person name="Thiel T."/>
            <person name="Pratte B.S."/>
            <person name="Zhong J."/>
            <person name="Goodwin L."/>
            <person name="Copeland A."/>
            <person name="Lucas S."/>
            <person name="Han C."/>
            <person name="Pitluck S."/>
            <person name="Land M.L."/>
            <person name="Kyrpides N.C."/>
            <person name="Woyke T."/>
        </authorList>
    </citation>
    <scope>NUCLEOTIDE SEQUENCE [LARGE SCALE GENOMIC DNA]</scope>
    <source>
        <strain>ATCC 29413 / PCC 7937</strain>
    </source>
</reference>
<comment type="function">
    <text evidence="1">Catalyzes the methylthiolation of an aspartic acid residue of ribosomal protein uS12.</text>
</comment>
<comment type="catalytic activity">
    <reaction evidence="1">
        <text>L-aspartate(89)-[ribosomal protein uS12]-hydrogen + (sulfur carrier)-SH + AH2 + 2 S-adenosyl-L-methionine = 3-methylsulfanyl-L-aspartate(89)-[ribosomal protein uS12]-hydrogen + (sulfur carrier)-H + 5'-deoxyadenosine + L-methionine + A + S-adenosyl-L-homocysteine + 2 H(+)</text>
        <dbReference type="Rhea" id="RHEA:37087"/>
        <dbReference type="Rhea" id="RHEA-COMP:10460"/>
        <dbReference type="Rhea" id="RHEA-COMP:10461"/>
        <dbReference type="Rhea" id="RHEA-COMP:14737"/>
        <dbReference type="Rhea" id="RHEA-COMP:14739"/>
        <dbReference type="ChEBI" id="CHEBI:13193"/>
        <dbReference type="ChEBI" id="CHEBI:15378"/>
        <dbReference type="ChEBI" id="CHEBI:17319"/>
        <dbReference type="ChEBI" id="CHEBI:17499"/>
        <dbReference type="ChEBI" id="CHEBI:29917"/>
        <dbReference type="ChEBI" id="CHEBI:29961"/>
        <dbReference type="ChEBI" id="CHEBI:57844"/>
        <dbReference type="ChEBI" id="CHEBI:57856"/>
        <dbReference type="ChEBI" id="CHEBI:59789"/>
        <dbReference type="ChEBI" id="CHEBI:64428"/>
        <dbReference type="ChEBI" id="CHEBI:73599"/>
        <dbReference type="EC" id="2.8.4.4"/>
    </reaction>
</comment>
<comment type="cofactor">
    <cofactor evidence="1">
        <name>[4Fe-4S] cluster</name>
        <dbReference type="ChEBI" id="CHEBI:49883"/>
    </cofactor>
    <text evidence="1">Binds 2 [4Fe-4S] clusters. One cluster is coordinated with 3 cysteines and an exchangeable S-adenosyl-L-methionine.</text>
</comment>
<comment type="subcellular location">
    <subcellularLocation>
        <location evidence="1">Cytoplasm</location>
    </subcellularLocation>
</comment>
<comment type="similarity">
    <text evidence="1">Belongs to the methylthiotransferase family. RimO subfamily.</text>
</comment>